<proteinExistence type="evidence at transcript level"/>
<gene>
    <name type="primary">RARA</name>
    <name type="synonym">NR1B1</name>
</gene>
<sequence>MASNGGSCPSSGGHMNGYPVPHYAFFFPHMLGGLSPPGSLAGIPHPLPVSAYSTPSPATIETQSTSSEEIVPSPPSPPPLPRIYKPCFVCQDKSSGYHYGVSACEGCKGFFRRSIQKNMVYTCHRDKTCIINKVTRNRCQYCRLQKCFEVGMSKESVRNDRNKKKKQEAPKQECTESYIITPEVEDLVEKVRKAHQETFPALCQLGKYTTNNSSEERVSLDIDLWDKFSELSTKCIIKTVEFAKQLPGFTTLTIADQITLLKAACLDILILRICTRYTPDQDTMTFSDGLTLNRTQMHNAGFGPLTDLVFAFANQLLPLEMDDAETGLLSAICLICGDRQDLEQPDKVDKLQEPLLEALKIYVRKRRPNKPHMFPKMLMKITDLRSISAKGAERVITLKMEIPGSMPPLIQEMLENSEGLDSLTGQPPRASSLAPPPGSCSPSLSPSSNRSSPTSHSP</sequence>
<feature type="chain" id="PRO_0000053465" description="Retinoic acid receptor alpha">
    <location>
        <begin position="1"/>
        <end position="458"/>
    </location>
</feature>
<feature type="domain" description="NR LBD" evidence="4">
    <location>
        <begin position="183"/>
        <end position="417"/>
    </location>
</feature>
<feature type="DNA-binding region" description="Nuclear receptor" evidence="3">
    <location>
        <begin position="87"/>
        <end position="152"/>
    </location>
</feature>
<feature type="zinc finger region" description="NR C4-type" evidence="3">
    <location>
        <begin position="87"/>
        <end position="107"/>
    </location>
</feature>
<feature type="zinc finger region" description="NR C4-type" evidence="3">
    <location>
        <begin position="123"/>
        <end position="147"/>
    </location>
</feature>
<feature type="region of interest" description="Modulating">
    <location>
        <begin position="1"/>
        <end position="86"/>
    </location>
</feature>
<feature type="region of interest" description="Disordered" evidence="5">
    <location>
        <begin position="54"/>
        <end position="76"/>
    </location>
</feature>
<feature type="region of interest" description="Hinge">
    <location>
        <begin position="153"/>
        <end position="182"/>
    </location>
</feature>
<feature type="region of interest" description="Disordered" evidence="5">
    <location>
        <begin position="417"/>
        <end position="458"/>
    </location>
</feature>
<feature type="short sequence motif" description="9aaTAD" evidence="2">
    <location>
        <begin position="408"/>
        <end position="416"/>
    </location>
</feature>
<feature type="compositionally biased region" description="Polar residues" evidence="5">
    <location>
        <begin position="54"/>
        <end position="68"/>
    </location>
</feature>
<feature type="compositionally biased region" description="Low complexity" evidence="5">
    <location>
        <begin position="440"/>
        <end position="458"/>
    </location>
</feature>
<feature type="splice variant" id="VSP_003633" description="In isoform Alpha-2." evidence="8">
    <original>MASNGGSCPSSGGHMNGYPVPHYAFFFPHMLGGLSPPGSLAGIPHPLPVSAYSTPSPAT</original>
    <variation>MYDSVEVSSPSPYIMIDFYSQNRACLMADKGLGHPVPFGSPIRNPHWSSSSHS</variation>
    <location>
        <begin position="1"/>
        <end position="59"/>
    </location>
</feature>
<dbReference type="EMBL" id="X17585">
    <property type="protein sequence ID" value="CAA35602.1"/>
    <property type="molecule type" value="mRNA"/>
</dbReference>
<dbReference type="EMBL" id="Z14254">
    <property type="protein sequence ID" value="CAA78621.1"/>
    <property type="molecule type" value="mRNA"/>
</dbReference>
<dbReference type="PIR" id="S06123">
    <property type="entry name" value="S06123"/>
</dbReference>
<dbReference type="PIR" id="S78481">
    <property type="entry name" value="S78481"/>
</dbReference>
<dbReference type="SMR" id="P18514"/>
<dbReference type="GO" id="GO:0005634">
    <property type="term" value="C:nucleus"/>
    <property type="evidence" value="ECO:0007669"/>
    <property type="project" value="UniProtKB-SubCell"/>
</dbReference>
<dbReference type="GO" id="GO:0005667">
    <property type="term" value="C:transcription regulator complex"/>
    <property type="evidence" value="ECO:0007669"/>
    <property type="project" value="TreeGrafter"/>
</dbReference>
<dbReference type="GO" id="GO:0035259">
    <property type="term" value="F:nuclear glucocorticoid receptor binding"/>
    <property type="evidence" value="ECO:0007669"/>
    <property type="project" value="TreeGrafter"/>
</dbReference>
<dbReference type="GO" id="GO:0004879">
    <property type="term" value="F:nuclear receptor activity"/>
    <property type="evidence" value="ECO:0007669"/>
    <property type="project" value="InterPro"/>
</dbReference>
<dbReference type="GO" id="GO:0000978">
    <property type="term" value="F:RNA polymerase II cis-regulatory region sequence-specific DNA binding"/>
    <property type="evidence" value="ECO:0007669"/>
    <property type="project" value="TreeGrafter"/>
</dbReference>
<dbReference type="GO" id="GO:0008270">
    <property type="term" value="F:zinc ion binding"/>
    <property type="evidence" value="ECO:0007669"/>
    <property type="project" value="UniProtKB-KW"/>
</dbReference>
<dbReference type="GO" id="GO:0071376">
    <property type="term" value="P:cellular response to corticotropin-releasing hormone stimulus"/>
    <property type="evidence" value="ECO:0007669"/>
    <property type="project" value="TreeGrafter"/>
</dbReference>
<dbReference type="GO" id="GO:0048384">
    <property type="term" value="P:retinoic acid receptor signaling pathway"/>
    <property type="evidence" value="ECO:0007669"/>
    <property type="project" value="InterPro"/>
</dbReference>
<dbReference type="CDD" id="cd06964">
    <property type="entry name" value="NR_DBD_RAR"/>
    <property type="match status" value="1"/>
</dbReference>
<dbReference type="CDD" id="cd06937">
    <property type="entry name" value="NR_LBD_RAR"/>
    <property type="match status" value="1"/>
</dbReference>
<dbReference type="FunFam" id="1.10.565.10:FF:000073">
    <property type="entry name" value="Retinoic acid receptor beta"/>
    <property type="match status" value="1"/>
</dbReference>
<dbReference type="FunFam" id="3.30.50.10:FF:000004">
    <property type="entry name" value="Retinoic acid receptor beta isoform"/>
    <property type="match status" value="1"/>
</dbReference>
<dbReference type="Gene3D" id="3.30.50.10">
    <property type="entry name" value="Erythroid Transcription Factor GATA-1, subunit A"/>
    <property type="match status" value="1"/>
</dbReference>
<dbReference type="Gene3D" id="1.10.565.10">
    <property type="entry name" value="Retinoid X Receptor"/>
    <property type="match status" value="1"/>
</dbReference>
<dbReference type="InterPro" id="IPR035500">
    <property type="entry name" value="NHR-like_dom_sf"/>
</dbReference>
<dbReference type="InterPro" id="IPR047159">
    <property type="entry name" value="NR_DBD_RAR"/>
</dbReference>
<dbReference type="InterPro" id="IPR047158">
    <property type="entry name" value="NR_LBD_RAR"/>
</dbReference>
<dbReference type="InterPro" id="IPR000536">
    <property type="entry name" value="Nucl_hrmn_rcpt_lig-bd"/>
</dbReference>
<dbReference type="InterPro" id="IPR001723">
    <property type="entry name" value="Nuclear_hrmn_rcpt"/>
</dbReference>
<dbReference type="InterPro" id="IPR003078">
    <property type="entry name" value="Retinoic_acid_rcpt"/>
</dbReference>
<dbReference type="InterPro" id="IPR001628">
    <property type="entry name" value="Znf_hrmn_rcpt"/>
</dbReference>
<dbReference type="InterPro" id="IPR013088">
    <property type="entry name" value="Znf_NHR/GATA"/>
</dbReference>
<dbReference type="PANTHER" id="PTHR24085">
    <property type="entry name" value="NUCLEAR HORMONE RECEPTOR"/>
    <property type="match status" value="1"/>
</dbReference>
<dbReference type="PANTHER" id="PTHR24085:SF8">
    <property type="entry name" value="RETINOIC ACID RECEPTOR ALPHA"/>
    <property type="match status" value="1"/>
</dbReference>
<dbReference type="Pfam" id="PF00104">
    <property type="entry name" value="Hormone_recep"/>
    <property type="match status" value="1"/>
</dbReference>
<dbReference type="Pfam" id="PF00105">
    <property type="entry name" value="zf-C4"/>
    <property type="match status" value="1"/>
</dbReference>
<dbReference type="PRINTS" id="PR01292">
    <property type="entry name" value="RETNOICACIDR"/>
</dbReference>
<dbReference type="PRINTS" id="PR00398">
    <property type="entry name" value="STRDHORMONER"/>
</dbReference>
<dbReference type="PRINTS" id="PR00047">
    <property type="entry name" value="STROIDFINGER"/>
</dbReference>
<dbReference type="SMART" id="SM00430">
    <property type="entry name" value="HOLI"/>
    <property type="match status" value="1"/>
</dbReference>
<dbReference type="SMART" id="SM00399">
    <property type="entry name" value="ZnF_C4"/>
    <property type="match status" value="1"/>
</dbReference>
<dbReference type="SUPFAM" id="SSF57716">
    <property type="entry name" value="Glucocorticoid receptor-like (DNA-binding domain)"/>
    <property type="match status" value="1"/>
</dbReference>
<dbReference type="SUPFAM" id="SSF48508">
    <property type="entry name" value="Nuclear receptor ligand-binding domain"/>
    <property type="match status" value="1"/>
</dbReference>
<dbReference type="PROSITE" id="PS51843">
    <property type="entry name" value="NR_LBD"/>
    <property type="match status" value="1"/>
</dbReference>
<dbReference type="PROSITE" id="PS00031">
    <property type="entry name" value="NUCLEAR_REC_DBD_1"/>
    <property type="match status" value="1"/>
</dbReference>
<dbReference type="PROSITE" id="PS51030">
    <property type="entry name" value="NUCLEAR_REC_DBD_2"/>
    <property type="match status" value="1"/>
</dbReference>
<reference key="1">
    <citation type="journal article" date="1989" name="Nature">
        <title>Identification of a novel retinoic acid receptor in regenerative tissues of the newt.</title>
        <authorList>
            <person name="Ragsdale C.W. Jr."/>
            <person name="Petkovich M."/>
            <person name="Gates P.B."/>
            <person name="Chambon P."/>
            <person name="Brockes J.P."/>
        </authorList>
    </citation>
    <scope>NUCLEOTIDE SEQUENCE [MRNA] (ISOFORM ALPHA-1)</scope>
    <scope>TISSUE SPECIFICITY</scope>
    <scope>POSSIBLE FUNCTION</scope>
</reference>
<reference key="2">
    <citation type="journal article" date="1992" name="Nucleic Acids Res.">
        <title>Identification and expression pattern of a second isoform of the newt alpha retinoic acid receptor.</title>
        <authorList>
            <person name="Ragsdale C.W. Jr."/>
            <person name="Gates P.B."/>
            <person name="Brockes J.P."/>
        </authorList>
    </citation>
    <scope>NUCLEOTIDE SEQUENCE [MRNA] (ISOFORM ALPHA-2)</scope>
    <scope>TISSUE SPECIFICITY</scope>
    <source>
        <tissue>Tail</tissue>
    </source>
</reference>
<accession>P18514</accession>
<accession>Q91155</accession>
<name>RARA_NOTVI</name>
<comment type="function">
    <text evidence="1">Receptor for retinoic acid. Retinoic acid receptors bind as heterodimers to their target response elements in response to their ligands, all-trans or 9-cis retinoic acid, and regulate gene expression in various biological processes. The rar/rxr heterodimers bind to the retinoic acid response elements (RARE) composed of tandem 5'-AGGTCA-3' sites known as DR1-DR5 (By similarity). Retinoic acid signaling appears to be involved in specifying proximal-distal axis in limb regeneration.</text>
</comment>
<comment type="subunit">
    <text evidence="1">Heterodimer; with an rxr molecule. Binds DNA preferentially as a rar/rxr heterodimer.</text>
</comment>
<comment type="subcellular location">
    <subcellularLocation>
        <location evidence="3">Nucleus</location>
    </subcellularLocation>
</comment>
<comment type="alternative products">
    <event type="alternative splicing"/>
    <isoform>
        <id>P18514-1</id>
        <name>Alpha-1</name>
        <sequence type="displayed"/>
    </isoform>
    <isoform>
        <id>P18514-2</id>
        <name>Alpha-2</name>
        <sequence type="described" ref="VSP_003633"/>
    </isoform>
</comment>
<comment type="tissue specificity">
    <text evidence="6 7">Expressed in forelimb, in the distal forelimb blastema, kidney, liver and hindlimb blastemal mesenchymal cells.</text>
</comment>
<comment type="domain">
    <text>Composed of three domains: a modulating N-terminal domain, a DNA-binding domain and a C-terminal ligand-binding domain.</text>
</comment>
<comment type="domain">
    <text evidence="2">The 9aaTAD motif is a transactivation domain present in a large number of yeast and animal transcription factors.</text>
</comment>
<comment type="similarity">
    <text evidence="9">Belongs to the nuclear hormone receptor family. NR1 subfamily.</text>
</comment>
<organism>
    <name type="scientific">Notophthalmus viridescens</name>
    <name type="common">Eastern newt</name>
    <name type="synonym">Triturus viridescens</name>
    <dbReference type="NCBI Taxonomy" id="8316"/>
    <lineage>
        <taxon>Eukaryota</taxon>
        <taxon>Metazoa</taxon>
        <taxon>Chordata</taxon>
        <taxon>Craniata</taxon>
        <taxon>Vertebrata</taxon>
        <taxon>Euteleostomi</taxon>
        <taxon>Amphibia</taxon>
        <taxon>Batrachia</taxon>
        <taxon>Caudata</taxon>
        <taxon>Salamandroidea</taxon>
        <taxon>Salamandridae</taxon>
        <taxon>Pleurodelinae</taxon>
        <taxon>Notophthalmus</taxon>
    </lineage>
</organism>
<evidence type="ECO:0000250" key="1"/>
<evidence type="ECO:0000250" key="2">
    <source>
        <dbReference type="UniProtKB" id="P10276"/>
    </source>
</evidence>
<evidence type="ECO:0000255" key="3">
    <source>
        <dbReference type="PROSITE-ProRule" id="PRU00407"/>
    </source>
</evidence>
<evidence type="ECO:0000255" key="4">
    <source>
        <dbReference type="PROSITE-ProRule" id="PRU01189"/>
    </source>
</evidence>
<evidence type="ECO:0000256" key="5">
    <source>
        <dbReference type="SAM" id="MobiDB-lite"/>
    </source>
</evidence>
<evidence type="ECO:0000269" key="6">
    <source>
    </source>
</evidence>
<evidence type="ECO:0000269" key="7">
    <source>
    </source>
</evidence>
<evidence type="ECO:0000303" key="8">
    <source>
    </source>
</evidence>
<evidence type="ECO:0000305" key="9"/>
<protein>
    <recommendedName>
        <fullName>Retinoic acid receptor alpha</fullName>
        <shortName>RAR-alpha</shortName>
    </recommendedName>
    <alternativeName>
        <fullName>Nuclear receptor subfamily 1 group B member 1</fullName>
    </alternativeName>
</protein>
<keyword id="KW-0025">Alternative splicing</keyword>
<keyword id="KW-0238">DNA-binding</keyword>
<keyword id="KW-0479">Metal-binding</keyword>
<keyword id="KW-0539">Nucleus</keyword>
<keyword id="KW-0675">Receptor</keyword>
<keyword id="KW-0804">Transcription</keyword>
<keyword id="KW-0805">Transcription regulation</keyword>
<keyword id="KW-0862">Zinc</keyword>
<keyword id="KW-0863">Zinc-finger</keyword>